<reference key="1">
    <citation type="submission" date="2006-01" db="EMBL/GenBank/DDBJ databases">
        <title>Complete sequence of Anaeromyxobacter dehalogenans 2CP-C.</title>
        <authorList>
            <person name="Copeland A."/>
            <person name="Lucas S."/>
            <person name="Lapidus A."/>
            <person name="Barry K."/>
            <person name="Detter J.C."/>
            <person name="Glavina T."/>
            <person name="Hammon N."/>
            <person name="Israni S."/>
            <person name="Pitluck S."/>
            <person name="Brettin T."/>
            <person name="Bruce D."/>
            <person name="Han C."/>
            <person name="Tapia R."/>
            <person name="Gilna P."/>
            <person name="Kiss H."/>
            <person name="Schmutz J."/>
            <person name="Larimer F."/>
            <person name="Land M."/>
            <person name="Kyrpides N."/>
            <person name="Anderson I."/>
            <person name="Sanford R.A."/>
            <person name="Ritalahti K.M."/>
            <person name="Thomas H.S."/>
            <person name="Kirby J.R."/>
            <person name="Zhulin I.B."/>
            <person name="Loeffler F.E."/>
            <person name="Richardson P."/>
        </authorList>
    </citation>
    <scope>NUCLEOTIDE SEQUENCE [LARGE SCALE GENOMIC DNA]</scope>
    <source>
        <strain>2CP-C</strain>
    </source>
</reference>
<comment type="similarity">
    <text evidence="1">Belongs to the bacterial ribosomal protein bL36 family.</text>
</comment>
<evidence type="ECO:0000255" key="1">
    <source>
        <dbReference type="HAMAP-Rule" id="MF_00251"/>
    </source>
</evidence>
<evidence type="ECO:0000305" key="2"/>
<keyword id="KW-1185">Reference proteome</keyword>
<keyword id="KW-0687">Ribonucleoprotein</keyword>
<keyword id="KW-0689">Ribosomal protein</keyword>
<dbReference type="EMBL" id="CP000251">
    <property type="protein sequence ID" value="ABC81694.1"/>
    <property type="molecule type" value="Genomic_DNA"/>
</dbReference>
<dbReference type="RefSeq" id="WP_011420977.1">
    <property type="nucleotide sequence ID" value="NC_007760.1"/>
</dbReference>
<dbReference type="SMR" id="Q2IJ62"/>
<dbReference type="STRING" id="290397.Adeh_1923"/>
<dbReference type="KEGG" id="ade:Adeh_1923"/>
<dbReference type="eggNOG" id="COG0257">
    <property type="taxonomic scope" value="Bacteria"/>
</dbReference>
<dbReference type="HOGENOM" id="CLU_135723_6_2_7"/>
<dbReference type="Proteomes" id="UP000001935">
    <property type="component" value="Chromosome"/>
</dbReference>
<dbReference type="GO" id="GO:0005737">
    <property type="term" value="C:cytoplasm"/>
    <property type="evidence" value="ECO:0007669"/>
    <property type="project" value="UniProtKB-ARBA"/>
</dbReference>
<dbReference type="GO" id="GO:1990904">
    <property type="term" value="C:ribonucleoprotein complex"/>
    <property type="evidence" value="ECO:0007669"/>
    <property type="project" value="UniProtKB-KW"/>
</dbReference>
<dbReference type="GO" id="GO:0005840">
    <property type="term" value="C:ribosome"/>
    <property type="evidence" value="ECO:0007669"/>
    <property type="project" value="UniProtKB-KW"/>
</dbReference>
<dbReference type="GO" id="GO:0003735">
    <property type="term" value="F:structural constituent of ribosome"/>
    <property type="evidence" value="ECO:0007669"/>
    <property type="project" value="InterPro"/>
</dbReference>
<dbReference type="GO" id="GO:0006412">
    <property type="term" value="P:translation"/>
    <property type="evidence" value="ECO:0007669"/>
    <property type="project" value="UniProtKB-UniRule"/>
</dbReference>
<dbReference type="HAMAP" id="MF_00251">
    <property type="entry name" value="Ribosomal_bL36"/>
    <property type="match status" value="1"/>
</dbReference>
<dbReference type="InterPro" id="IPR000473">
    <property type="entry name" value="Ribosomal_bL36"/>
</dbReference>
<dbReference type="InterPro" id="IPR035977">
    <property type="entry name" value="Ribosomal_bL36_sp"/>
</dbReference>
<dbReference type="NCBIfam" id="TIGR01022">
    <property type="entry name" value="rpmJ_bact"/>
    <property type="match status" value="1"/>
</dbReference>
<dbReference type="PANTHER" id="PTHR42888">
    <property type="entry name" value="50S RIBOSOMAL PROTEIN L36, CHLOROPLASTIC"/>
    <property type="match status" value="1"/>
</dbReference>
<dbReference type="PANTHER" id="PTHR42888:SF1">
    <property type="entry name" value="LARGE RIBOSOMAL SUBUNIT PROTEIN BL36C"/>
    <property type="match status" value="1"/>
</dbReference>
<dbReference type="Pfam" id="PF00444">
    <property type="entry name" value="Ribosomal_L36"/>
    <property type="match status" value="1"/>
</dbReference>
<dbReference type="SUPFAM" id="SSF57840">
    <property type="entry name" value="Ribosomal protein L36"/>
    <property type="match status" value="1"/>
</dbReference>
<dbReference type="PROSITE" id="PS00828">
    <property type="entry name" value="RIBOSOMAL_L36"/>
    <property type="match status" value="1"/>
</dbReference>
<sequence>MKVRASVKKICDKCKVIKRKGTVRIICPANPRHKQRQG</sequence>
<feature type="chain" id="PRO_0000302152" description="Large ribosomal subunit protein bL36">
    <location>
        <begin position="1"/>
        <end position="38"/>
    </location>
</feature>
<name>RL36_ANADE</name>
<proteinExistence type="inferred from homology"/>
<accession>Q2IJ62</accession>
<organism>
    <name type="scientific">Anaeromyxobacter dehalogenans (strain 2CP-C)</name>
    <dbReference type="NCBI Taxonomy" id="290397"/>
    <lineage>
        <taxon>Bacteria</taxon>
        <taxon>Pseudomonadati</taxon>
        <taxon>Myxococcota</taxon>
        <taxon>Myxococcia</taxon>
        <taxon>Myxococcales</taxon>
        <taxon>Cystobacterineae</taxon>
        <taxon>Anaeromyxobacteraceae</taxon>
        <taxon>Anaeromyxobacter</taxon>
    </lineage>
</organism>
<protein>
    <recommendedName>
        <fullName evidence="1">Large ribosomal subunit protein bL36</fullName>
    </recommendedName>
    <alternativeName>
        <fullName evidence="2">50S ribosomal protein L36</fullName>
    </alternativeName>
</protein>
<gene>
    <name evidence="1" type="primary">rpmJ</name>
    <name type="ordered locus">Adeh_1923</name>
</gene>